<feature type="chain" id="PRO_1000164023" description="Regulatory protein RecX">
    <location>
        <begin position="1"/>
        <end position="166"/>
    </location>
</feature>
<organism>
    <name type="scientific">Salmonella paratyphi C (strain RKS4594)</name>
    <dbReference type="NCBI Taxonomy" id="476213"/>
    <lineage>
        <taxon>Bacteria</taxon>
        <taxon>Pseudomonadati</taxon>
        <taxon>Pseudomonadota</taxon>
        <taxon>Gammaproteobacteria</taxon>
        <taxon>Enterobacterales</taxon>
        <taxon>Enterobacteriaceae</taxon>
        <taxon>Salmonella</taxon>
    </lineage>
</organism>
<dbReference type="EMBL" id="CP000857">
    <property type="protein sequence ID" value="ACN46963.1"/>
    <property type="molecule type" value="Genomic_DNA"/>
</dbReference>
<dbReference type="RefSeq" id="WP_001294865.1">
    <property type="nucleotide sequence ID" value="NC_012125.1"/>
</dbReference>
<dbReference type="SMR" id="C0PWM1"/>
<dbReference type="KEGG" id="sei:SPC_2869"/>
<dbReference type="HOGENOM" id="CLU_066607_3_2_6"/>
<dbReference type="Proteomes" id="UP000001599">
    <property type="component" value="Chromosome"/>
</dbReference>
<dbReference type="GO" id="GO:0005737">
    <property type="term" value="C:cytoplasm"/>
    <property type="evidence" value="ECO:0007669"/>
    <property type="project" value="UniProtKB-SubCell"/>
</dbReference>
<dbReference type="GO" id="GO:0006282">
    <property type="term" value="P:regulation of DNA repair"/>
    <property type="evidence" value="ECO:0007669"/>
    <property type="project" value="UniProtKB-UniRule"/>
</dbReference>
<dbReference type="FunFam" id="1.10.10.10:FF:000133">
    <property type="entry name" value="Regulatory protein RecX"/>
    <property type="match status" value="1"/>
</dbReference>
<dbReference type="FunFam" id="1.10.10.10:FF:000134">
    <property type="entry name" value="Regulatory protein RecX"/>
    <property type="match status" value="1"/>
</dbReference>
<dbReference type="Gene3D" id="1.10.10.10">
    <property type="entry name" value="Winged helix-like DNA-binding domain superfamily/Winged helix DNA-binding domain"/>
    <property type="match status" value="3"/>
</dbReference>
<dbReference type="HAMAP" id="MF_01114">
    <property type="entry name" value="RecX"/>
    <property type="match status" value="1"/>
</dbReference>
<dbReference type="InterPro" id="IPR053926">
    <property type="entry name" value="RecX_HTH_1st"/>
</dbReference>
<dbReference type="InterPro" id="IPR053924">
    <property type="entry name" value="RecX_HTH_2nd"/>
</dbReference>
<dbReference type="InterPro" id="IPR053925">
    <property type="entry name" value="RecX_HTH_3rd"/>
</dbReference>
<dbReference type="InterPro" id="IPR003783">
    <property type="entry name" value="Regulatory_RecX"/>
</dbReference>
<dbReference type="InterPro" id="IPR036388">
    <property type="entry name" value="WH-like_DNA-bd_sf"/>
</dbReference>
<dbReference type="NCBIfam" id="NF001052">
    <property type="entry name" value="PRK00117.1-1"/>
    <property type="match status" value="1"/>
</dbReference>
<dbReference type="PANTHER" id="PTHR33602">
    <property type="entry name" value="REGULATORY PROTEIN RECX FAMILY PROTEIN"/>
    <property type="match status" value="1"/>
</dbReference>
<dbReference type="PANTHER" id="PTHR33602:SF1">
    <property type="entry name" value="REGULATORY PROTEIN RECX FAMILY PROTEIN"/>
    <property type="match status" value="1"/>
</dbReference>
<dbReference type="Pfam" id="PF21982">
    <property type="entry name" value="RecX_HTH1"/>
    <property type="match status" value="1"/>
</dbReference>
<dbReference type="Pfam" id="PF02631">
    <property type="entry name" value="RecX_HTH2"/>
    <property type="match status" value="1"/>
</dbReference>
<dbReference type="Pfam" id="PF21981">
    <property type="entry name" value="RecX_HTH3"/>
    <property type="match status" value="1"/>
</dbReference>
<gene>
    <name evidence="1" type="primary">recX</name>
    <name type="ordered locus">SPC_2869</name>
</gene>
<accession>C0PWM1</accession>
<reference key="1">
    <citation type="journal article" date="2009" name="PLoS ONE">
        <title>Salmonella paratyphi C: genetic divergence from Salmonella choleraesuis and pathogenic convergence with Salmonella typhi.</title>
        <authorList>
            <person name="Liu W.-Q."/>
            <person name="Feng Y."/>
            <person name="Wang Y."/>
            <person name="Zou Q.-H."/>
            <person name="Chen F."/>
            <person name="Guo J.-T."/>
            <person name="Peng Y.-H."/>
            <person name="Jin Y."/>
            <person name="Li Y.-G."/>
            <person name="Hu S.-N."/>
            <person name="Johnston R.N."/>
            <person name="Liu G.-R."/>
            <person name="Liu S.-L."/>
        </authorList>
    </citation>
    <scope>NUCLEOTIDE SEQUENCE [LARGE SCALE GENOMIC DNA]</scope>
    <source>
        <strain>RKS4594</strain>
    </source>
</reference>
<sequence length="166" mass="19652">MSEPTSRRPAYARLLDRAVRILAVRDHSEQELRRKLSAPVMGKNGPEEIDATADDYERVIAWCHEHHYLDDERFVMRFIASRSRKGYGPARIYQELNQKGISRESTEKAMRECEIDWSEMAHEQAVRKYGEPLPSNFSEKVKVQRFLLYRGYLMDDIQQIWRNFAD</sequence>
<protein>
    <recommendedName>
        <fullName evidence="1">Regulatory protein RecX</fullName>
    </recommendedName>
</protein>
<keyword id="KW-0963">Cytoplasm</keyword>
<comment type="function">
    <text evidence="1">Modulates RecA activity.</text>
</comment>
<comment type="subcellular location">
    <subcellularLocation>
        <location evidence="1">Cytoplasm</location>
    </subcellularLocation>
</comment>
<comment type="similarity">
    <text evidence="1">Belongs to the RecX family.</text>
</comment>
<proteinExistence type="inferred from homology"/>
<evidence type="ECO:0000255" key="1">
    <source>
        <dbReference type="HAMAP-Rule" id="MF_01114"/>
    </source>
</evidence>
<name>RECX_SALPC</name>